<keyword id="KW-0963">Cytoplasm</keyword>
<keyword id="KW-0396">Initiation factor</keyword>
<keyword id="KW-0648">Protein biosynthesis</keyword>
<keyword id="KW-0694">RNA-binding</keyword>
<keyword id="KW-0699">rRNA-binding</keyword>
<name>IF1_STAAW</name>
<organism>
    <name type="scientific">Staphylococcus aureus (strain MW2)</name>
    <dbReference type="NCBI Taxonomy" id="196620"/>
    <lineage>
        <taxon>Bacteria</taxon>
        <taxon>Bacillati</taxon>
        <taxon>Bacillota</taxon>
        <taxon>Bacilli</taxon>
        <taxon>Bacillales</taxon>
        <taxon>Staphylococcaceae</taxon>
        <taxon>Staphylococcus</taxon>
    </lineage>
</organism>
<sequence>MAKQDVIELEGTVLDTLPNAMFKVELENGHEILAHVSGKIRMNYIRILPGDKVTVEMSPYDLTRGRITYRYK</sequence>
<gene>
    <name evidence="1" type="primary">infA</name>
    <name type="ordered locus">MW2147</name>
</gene>
<dbReference type="EMBL" id="BA000033">
    <property type="protein sequence ID" value="BAB96012.1"/>
    <property type="molecule type" value="Genomic_DNA"/>
</dbReference>
<dbReference type="RefSeq" id="WP_001118443.1">
    <property type="nucleotide sequence ID" value="NC_003923.1"/>
</dbReference>
<dbReference type="SMR" id="P65120"/>
<dbReference type="GeneID" id="98346540"/>
<dbReference type="KEGG" id="sam:MW2147"/>
<dbReference type="HOGENOM" id="CLU_151267_1_0_9"/>
<dbReference type="GO" id="GO:0005829">
    <property type="term" value="C:cytosol"/>
    <property type="evidence" value="ECO:0007669"/>
    <property type="project" value="TreeGrafter"/>
</dbReference>
<dbReference type="GO" id="GO:0043022">
    <property type="term" value="F:ribosome binding"/>
    <property type="evidence" value="ECO:0007669"/>
    <property type="project" value="UniProtKB-UniRule"/>
</dbReference>
<dbReference type="GO" id="GO:0019843">
    <property type="term" value="F:rRNA binding"/>
    <property type="evidence" value="ECO:0007669"/>
    <property type="project" value="UniProtKB-UniRule"/>
</dbReference>
<dbReference type="GO" id="GO:0003743">
    <property type="term" value="F:translation initiation factor activity"/>
    <property type="evidence" value="ECO:0007669"/>
    <property type="project" value="UniProtKB-UniRule"/>
</dbReference>
<dbReference type="CDD" id="cd04451">
    <property type="entry name" value="S1_IF1"/>
    <property type="match status" value="1"/>
</dbReference>
<dbReference type="FunFam" id="2.40.50.140:FF:000002">
    <property type="entry name" value="Translation initiation factor IF-1"/>
    <property type="match status" value="1"/>
</dbReference>
<dbReference type="Gene3D" id="2.40.50.140">
    <property type="entry name" value="Nucleic acid-binding proteins"/>
    <property type="match status" value="1"/>
</dbReference>
<dbReference type="HAMAP" id="MF_00075">
    <property type="entry name" value="IF_1"/>
    <property type="match status" value="1"/>
</dbReference>
<dbReference type="InterPro" id="IPR012340">
    <property type="entry name" value="NA-bd_OB-fold"/>
</dbReference>
<dbReference type="InterPro" id="IPR006196">
    <property type="entry name" value="RNA-binding_domain_S1_IF1"/>
</dbReference>
<dbReference type="InterPro" id="IPR003029">
    <property type="entry name" value="S1_domain"/>
</dbReference>
<dbReference type="InterPro" id="IPR004368">
    <property type="entry name" value="TIF_IF1"/>
</dbReference>
<dbReference type="NCBIfam" id="TIGR00008">
    <property type="entry name" value="infA"/>
    <property type="match status" value="1"/>
</dbReference>
<dbReference type="PANTHER" id="PTHR33370">
    <property type="entry name" value="TRANSLATION INITIATION FACTOR IF-1, CHLOROPLASTIC"/>
    <property type="match status" value="1"/>
</dbReference>
<dbReference type="PANTHER" id="PTHR33370:SF1">
    <property type="entry name" value="TRANSLATION INITIATION FACTOR IF-1, CHLOROPLASTIC"/>
    <property type="match status" value="1"/>
</dbReference>
<dbReference type="Pfam" id="PF01176">
    <property type="entry name" value="eIF-1a"/>
    <property type="match status" value="1"/>
</dbReference>
<dbReference type="SMART" id="SM00316">
    <property type="entry name" value="S1"/>
    <property type="match status" value="1"/>
</dbReference>
<dbReference type="SUPFAM" id="SSF50249">
    <property type="entry name" value="Nucleic acid-binding proteins"/>
    <property type="match status" value="1"/>
</dbReference>
<dbReference type="PROSITE" id="PS50832">
    <property type="entry name" value="S1_IF1_TYPE"/>
    <property type="match status" value="1"/>
</dbReference>
<reference key="1">
    <citation type="journal article" date="2002" name="Lancet">
        <title>Genome and virulence determinants of high virulence community-acquired MRSA.</title>
        <authorList>
            <person name="Baba T."/>
            <person name="Takeuchi F."/>
            <person name="Kuroda M."/>
            <person name="Yuzawa H."/>
            <person name="Aoki K."/>
            <person name="Oguchi A."/>
            <person name="Nagai Y."/>
            <person name="Iwama N."/>
            <person name="Asano K."/>
            <person name="Naimi T."/>
            <person name="Kuroda H."/>
            <person name="Cui L."/>
            <person name="Yamamoto K."/>
            <person name="Hiramatsu K."/>
        </authorList>
    </citation>
    <scope>NUCLEOTIDE SEQUENCE [LARGE SCALE GENOMIC DNA]</scope>
    <source>
        <strain>MW2</strain>
    </source>
</reference>
<feature type="chain" id="PRO_0000095870" description="Translation initiation factor IF-1">
    <location>
        <begin position="1"/>
        <end position="72"/>
    </location>
</feature>
<feature type="domain" description="S1-like" evidence="1">
    <location>
        <begin position="1"/>
        <end position="72"/>
    </location>
</feature>
<evidence type="ECO:0000255" key="1">
    <source>
        <dbReference type="HAMAP-Rule" id="MF_00075"/>
    </source>
</evidence>
<accession>P65120</accession>
<accession>Q99S41</accession>
<comment type="function">
    <text evidence="1">One of the essential components for the initiation of protein synthesis. Stabilizes the binding of IF-2 and IF-3 on the 30S subunit to which N-formylmethionyl-tRNA(fMet) subsequently binds. Helps modulate mRNA selection, yielding the 30S pre-initiation complex (PIC). Upon addition of the 50S ribosomal subunit IF-1, IF-2 and IF-3 are released leaving the mature 70S translation initiation complex.</text>
</comment>
<comment type="subunit">
    <text evidence="1">Component of the 30S ribosomal translation pre-initiation complex which assembles on the 30S ribosome in the order IF-2 and IF-3, IF-1 and N-formylmethionyl-tRNA(fMet); mRNA recruitment can occur at any time during PIC assembly.</text>
</comment>
<comment type="subcellular location">
    <subcellularLocation>
        <location evidence="1">Cytoplasm</location>
    </subcellularLocation>
</comment>
<comment type="similarity">
    <text evidence="1">Belongs to the IF-1 family.</text>
</comment>
<proteinExistence type="inferred from homology"/>
<protein>
    <recommendedName>
        <fullName evidence="1">Translation initiation factor IF-1</fullName>
    </recommendedName>
</protein>